<evidence type="ECO:0000250" key="1"/>
<evidence type="ECO:0000250" key="2">
    <source>
        <dbReference type="UniProtKB" id="Q86YD1"/>
    </source>
</evidence>
<evidence type="ECO:0000250" key="3">
    <source>
        <dbReference type="UniProtKB" id="Q91VU8"/>
    </source>
</evidence>
<evidence type="ECO:0000256" key="4">
    <source>
        <dbReference type="SAM" id="MobiDB-lite"/>
    </source>
</evidence>
<evidence type="ECO:0000305" key="5"/>
<dbReference type="EMBL" id="BC134519">
    <property type="protein sequence ID" value="AAI34520.1"/>
    <property type="molecule type" value="mRNA"/>
</dbReference>
<dbReference type="RefSeq" id="NP_001077249.1">
    <property type="nucleotide sequence ID" value="NM_001083780.1"/>
</dbReference>
<dbReference type="SMR" id="A4IFC9"/>
<dbReference type="FunCoup" id="A4IFC9">
    <property type="interactions" value="1757"/>
</dbReference>
<dbReference type="STRING" id="9913.ENSBTAP00000066646"/>
<dbReference type="PaxDb" id="9913-ENSBTAP00000026147"/>
<dbReference type="GeneID" id="617775"/>
<dbReference type="KEGG" id="bta:617775"/>
<dbReference type="CTD" id="53635"/>
<dbReference type="VEuPathDB" id="HostDB:ENSBTAG00000030578"/>
<dbReference type="eggNOG" id="ENOG502SS25">
    <property type="taxonomic scope" value="Eukaryota"/>
</dbReference>
<dbReference type="HOGENOM" id="CLU_045342_0_0_1"/>
<dbReference type="InParanoid" id="A4IFC9"/>
<dbReference type="OMA" id="NELLWTG"/>
<dbReference type="OrthoDB" id="7690434at2759"/>
<dbReference type="TreeFam" id="TF329598"/>
<dbReference type="Proteomes" id="UP000009136">
    <property type="component" value="Chromosome 18"/>
</dbReference>
<dbReference type="Bgee" id="ENSBTAG00000030578">
    <property type="expression patterns" value="Expressed in retina and 107 other cell types or tissues"/>
</dbReference>
<dbReference type="GO" id="GO:0005634">
    <property type="term" value="C:nucleus"/>
    <property type="evidence" value="ECO:0007669"/>
    <property type="project" value="UniProtKB-SubCell"/>
</dbReference>
<dbReference type="GO" id="GO:0048471">
    <property type="term" value="C:perinuclear region of cytoplasm"/>
    <property type="evidence" value="ECO:0007669"/>
    <property type="project" value="UniProtKB-SubCell"/>
</dbReference>
<dbReference type="GO" id="GO:0005886">
    <property type="term" value="C:plasma membrane"/>
    <property type="evidence" value="ECO:0007669"/>
    <property type="project" value="UniProtKB-SubCell"/>
</dbReference>
<dbReference type="GO" id="GO:0005667">
    <property type="term" value="C:transcription regulator complex"/>
    <property type="evidence" value="ECO:0000318"/>
    <property type="project" value="GO_Central"/>
</dbReference>
<dbReference type="GO" id="GO:0045944">
    <property type="term" value="P:positive regulation of transcription by RNA polymerase II"/>
    <property type="evidence" value="ECO:0000318"/>
    <property type="project" value="GO_Central"/>
</dbReference>
<dbReference type="FunFam" id="2.40.290.30:FF:000001">
    <property type="entry name" value="Mediator of RNA polymerase II transcription subunit 25"/>
    <property type="match status" value="2"/>
</dbReference>
<dbReference type="Gene3D" id="2.40.290.30">
    <property type="entry name" value="Mediator complex subunit 25, ACID domain"/>
    <property type="match status" value="2"/>
</dbReference>
<dbReference type="InterPro" id="IPR021394">
    <property type="entry name" value="Med25_PTOV"/>
</dbReference>
<dbReference type="InterPro" id="IPR038196">
    <property type="entry name" value="Med25_PTOV_sf"/>
</dbReference>
<dbReference type="PANTHER" id="PTHR12433">
    <property type="entry name" value="MEDIATOR OF RNA POLYMERASE II TRANSCRIPTION SUBUNIT 25"/>
    <property type="match status" value="1"/>
</dbReference>
<dbReference type="PANTHER" id="PTHR12433:SF3">
    <property type="entry name" value="PROSTATE TUMOR-OVEREXPRESSED GENE 1 PROTEIN"/>
    <property type="match status" value="1"/>
</dbReference>
<dbReference type="Pfam" id="PF11232">
    <property type="entry name" value="Med25"/>
    <property type="match status" value="2"/>
</dbReference>
<reference key="1">
    <citation type="submission" date="2007-03" db="EMBL/GenBank/DDBJ databases">
        <authorList>
            <consortium name="NIH - Mammalian Gene Collection (MGC) project"/>
        </authorList>
    </citation>
    <scope>NUCLEOTIDE SEQUENCE [LARGE SCALE MRNA]</scope>
    <source>
        <strain>Hereford</strain>
        <tissue>Hippocampus</tissue>
    </source>
</reference>
<accession>A4IFC9</accession>
<organism>
    <name type="scientific">Bos taurus</name>
    <name type="common">Bovine</name>
    <dbReference type="NCBI Taxonomy" id="9913"/>
    <lineage>
        <taxon>Eukaryota</taxon>
        <taxon>Metazoa</taxon>
        <taxon>Chordata</taxon>
        <taxon>Craniata</taxon>
        <taxon>Vertebrata</taxon>
        <taxon>Euteleostomi</taxon>
        <taxon>Mammalia</taxon>
        <taxon>Eutheria</taxon>
        <taxon>Laurasiatheria</taxon>
        <taxon>Artiodactyla</taxon>
        <taxon>Ruminantia</taxon>
        <taxon>Pecora</taxon>
        <taxon>Bovidae</taxon>
        <taxon>Bovinae</taxon>
        <taxon>Bos</taxon>
    </lineage>
</organism>
<name>PTOV1_BOVIN</name>
<comment type="function">
    <text evidence="2">May activate transcription. Required for nuclear translocation of FLOT1. Promotes cell proliferation.</text>
</comment>
<comment type="subunit">
    <text evidence="2">May interact with CREBBP. Interacts with FLOT1.</text>
</comment>
<comment type="subcellular location">
    <subcellularLocation>
        <location evidence="2">Cytoplasm</location>
    </subcellularLocation>
    <subcellularLocation>
        <location evidence="2">Nucleus</location>
    </subcellularLocation>
    <subcellularLocation>
        <location evidence="2">Cell membrane</location>
    </subcellularLocation>
    <subcellularLocation>
        <location evidence="2">Cytoplasm</location>
        <location evidence="2">Perinuclear region</location>
    </subcellularLocation>
    <text evidence="2">Translocates from the cytoplasm to the nucleus at the onset of S-phase. Also localizes to lipid rafts.</text>
</comment>
<comment type="PTM">
    <text evidence="2">Ubiquitinated by the CRL2(KLHDC2) complex, which recognizes the diglycine (Gly-Gly) at the C-terminus, leading to its degradation. Ubiquitinated by the CRL2(APPBP2) complex, which recognizes the Arg-Xaa-Xaa-Gly sequence at the C-terminus, leading to its degradation.</text>
</comment>
<comment type="similarity">
    <text evidence="5">Belongs to the Mediator complex subunit 25 family. PTOV1 subfamily.</text>
</comment>
<comment type="caution">
    <text evidence="5">Despite sequence similarity to MED25, to date this protein has not been identified as a component of the Mediator complex.</text>
</comment>
<gene>
    <name type="primary">PTOV1</name>
</gene>
<keyword id="KW-0010">Activator</keyword>
<keyword id="KW-1003">Cell membrane</keyword>
<keyword id="KW-0963">Cytoplasm</keyword>
<keyword id="KW-0472">Membrane</keyword>
<keyword id="KW-0539">Nucleus</keyword>
<keyword id="KW-0597">Phosphoprotein</keyword>
<keyword id="KW-1185">Reference proteome</keyword>
<keyword id="KW-0804">Transcription</keyword>
<keyword id="KW-0805">Transcription regulation</keyword>
<keyword id="KW-0832">Ubl conjugation</keyword>
<sequence>MVRPRRAPHRSGAGGPLGGRGRPLRPFTARAARSRSWPASPRGPQPPRIRARSAPPMQGARVFGALGPIGPSSPGLALGGLAVGEHRLSNKLLAWSGVLEWQEKRRPYSDSTAKLKRALPCQAYVNQGENLETDQWPQKLIMQLIPQQLLTTLGPLFRNSQLAQFHFTNRDCDSLKGLCRVMGNGFAGCMLFPHISPCEVRVLMLLYSSKKKIFMGLIPYDQSGFVNAIRQVITTRKQAVGPGGVAGPVQIVNNKFLAWSGVMEWQEPRPEPHSRSKRWLPSHIYVNQGEILRTEQWPRKLYMQLIPQQLLTTLVPLFRNSRLVQFHFTKDLETLKSLCRIMDNGFAGCVHFSYKASCEVRVLMLLYSSEKKIFIGLIPHDQSNFVNGIRRVIANQQQVLQRNLEQEQQQRGMGG</sequence>
<feature type="chain" id="PRO_0000304964" description="Prostate tumor-overexpressed gene 1 protein homolog">
    <location>
        <begin position="1"/>
        <end position="415"/>
    </location>
</feature>
<feature type="region of interest" description="Disordered" evidence="4">
    <location>
        <begin position="1"/>
        <end position="54"/>
    </location>
</feature>
<feature type="region of interest" description="Interaction with FLOT1" evidence="1">
    <location>
        <begin position="184"/>
        <end position="415"/>
    </location>
</feature>
<feature type="compositionally biased region" description="Gly residues" evidence="4">
    <location>
        <begin position="12"/>
        <end position="21"/>
    </location>
</feature>
<feature type="compositionally biased region" description="Low complexity" evidence="4">
    <location>
        <begin position="24"/>
        <end position="40"/>
    </location>
</feature>
<feature type="modified residue" description="Phosphoserine" evidence="3">
    <location>
        <position position="53"/>
    </location>
</feature>
<proteinExistence type="evidence at transcript level"/>
<protein>
    <recommendedName>
        <fullName>Prostate tumor-overexpressed gene 1 protein homolog</fullName>
    </recommendedName>
</protein>